<organism>
    <name type="scientific">Clostridioides difficile (strain 630)</name>
    <name type="common">Peptoclostridium difficile</name>
    <dbReference type="NCBI Taxonomy" id="272563"/>
    <lineage>
        <taxon>Bacteria</taxon>
        <taxon>Bacillati</taxon>
        <taxon>Bacillota</taxon>
        <taxon>Clostridia</taxon>
        <taxon>Peptostreptococcales</taxon>
        <taxon>Peptostreptococcaceae</taxon>
        <taxon>Clostridioides</taxon>
    </lineage>
</organism>
<dbReference type="EC" id="2.7.7.85" evidence="1"/>
<dbReference type="EMBL" id="AM180355">
    <property type="protein sequence ID" value="CAJ66842.1"/>
    <property type="molecule type" value="Genomic_DNA"/>
</dbReference>
<dbReference type="RefSeq" id="WP_004453975.1">
    <property type="nucleotide sequence ID" value="NZ_JAUPES010000031.1"/>
</dbReference>
<dbReference type="RefSeq" id="YP_001086491.1">
    <property type="nucleotide sequence ID" value="NC_009089.1"/>
</dbReference>
<dbReference type="SMR" id="Q18CB2"/>
<dbReference type="STRING" id="272563.CD630_00280"/>
<dbReference type="EnsemblBacteria" id="CAJ66842">
    <property type="protein sequence ID" value="CAJ66842"/>
    <property type="gene ID" value="CD630_00280"/>
</dbReference>
<dbReference type="GeneID" id="66352524"/>
<dbReference type="KEGG" id="cdf:CD630_00280"/>
<dbReference type="KEGG" id="pdc:CDIF630_00090"/>
<dbReference type="PATRIC" id="fig|272563.120.peg.32"/>
<dbReference type="eggNOG" id="COG1623">
    <property type="taxonomic scope" value="Bacteria"/>
</dbReference>
<dbReference type="OrthoDB" id="41841at2"/>
<dbReference type="PhylomeDB" id="Q18CB2"/>
<dbReference type="BioCyc" id="PDIF272563:G12WB-80-MONOMER"/>
<dbReference type="Proteomes" id="UP000001978">
    <property type="component" value="Chromosome"/>
</dbReference>
<dbReference type="GO" id="GO:0004016">
    <property type="term" value="F:adenylate cyclase activity"/>
    <property type="evidence" value="ECO:0007669"/>
    <property type="project" value="TreeGrafter"/>
</dbReference>
<dbReference type="GO" id="GO:0005524">
    <property type="term" value="F:ATP binding"/>
    <property type="evidence" value="ECO:0007669"/>
    <property type="project" value="UniProtKB-UniRule"/>
</dbReference>
<dbReference type="GO" id="GO:0106408">
    <property type="term" value="F:diadenylate cyclase activity"/>
    <property type="evidence" value="ECO:0007669"/>
    <property type="project" value="UniProtKB-EC"/>
</dbReference>
<dbReference type="GO" id="GO:0003677">
    <property type="term" value="F:DNA binding"/>
    <property type="evidence" value="ECO:0007669"/>
    <property type="project" value="UniProtKB-UniRule"/>
</dbReference>
<dbReference type="GO" id="GO:0006281">
    <property type="term" value="P:DNA repair"/>
    <property type="evidence" value="ECO:0007669"/>
    <property type="project" value="UniProtKB-UniRule"/>
</dbReference>
<dbReference type="FunFam" id="3.40.1700.10:FF:000001">
    <property type="entry name" value="DNA integrity scanning protein DisA"/>
    <property type="match status" value="1"/>
</dbReference>
<dbReference type="Gene3D" id="1.10.150.20">
    <property type="entry name" value="5' to 3' exonuclease, C-terminal subdomain"/>
    <property type="match status" value="1"/>
</dbReference>
<dbReference type="Gene3D" id="1.20.1260.110">
    <property type="entry name" value="DNA integrity scanning linker region"/>
    <property type="match status" value="1"/>
</dbReference>
<dbReference type="Gene3D" id="3.40.1700.10">
    <property type="entry name" value="DNA integrity scanning protein, DisA, N-terminal domain"/>
    <property type="match status" value="1"/>
</dbReference>
<dbReference type="HAMAP" id="MF_01438">
    <property type="entry name" value="DisA"/>
    <property type="match status" value="1"/>
</dbReference>
<dbReference type="InterPro" id="IPR050338">
    <property type="entry name" value="DisA"/>
</dbReference>
<dbReference type="InterPro" id="IPR038331">
    <property type="entry name" value="DisA_sf"/>
</dbReference>
<dbReference type="InterPro" id="IPR036888">
    <property type="entry name" value="DNA_integrity_DisA_N_sf"/>
</dbReference>
<dbReference type="InterPro" id="IPR018906">
    <property type="entry name" value="DNA_integrity_scan_DisA_link"/>
</dbReference>
<dbReference type="InterPro" id="IPR003390">
    <property type="entry name" value="DNA_integrity_scan_DisA_N"/>
</dbReference>
<dbReference type="InterPro" id="IPR023763">
    <property type="entry name" value="DNA_integrity_scanning_protein"/>
</dbReference>
<dbReference type="InterPro" id="IPR010994">
    <property type="entry name" value="RuvA_2-like"/>
</dbReference>
<dbReference type="NCBIfam" id="NF010009">
    <property type="entry name" value="PRK13482.1"/>
    <property type="match status" value="1"/>
</dbReference>
<dbReference type="PANTHER" id="PTHR34185">
    <property type="entry name" value="DIADENYLATE CYCLASE"/>
    <property type="match status" value="1"/>
</dbReference>
<dbReference type="PANTHER" id="PTHR34185:SF3">
    <property type="entry name" value="DNA INTEGRITY SCANNING PROTEIN DISA"/>
    <property type="match status" value="1"/>
</dbReference>
<dbReference type="Pfam" id="PF02457">
    <property type="entry name" value="DAC"/>
    <property type="match status" value="1"/>
</dbReference>
<dbReference type="Pfam" id="PF10635">
    <property type="entry name" value="DisA-linker"/>
    <property type="match status" value="1"/>
</dbReference>
<dbReference type="SUPFAM" id="SSF47781">
    <property type="entry name" value="RuvA domain 2-like"/>
    <property type="match status" value="1"/>
</dbReference>
<dbReference type="SUPFAM" id="SSF143597">
    <property type="entry name" value="YojJ-like"/>
    <property type="match status" value="1"/>
</dbReference>
<dbReference type="PROSITE" id="PS51794">
    <property type="entry name" value="DAC"/>
    <property type="match status" value="1"/>
</dbReference>
<evidence type="ECO:0000255" key="1">
    <source>
        <dbReference type="HAMAP-Rule" id="MF_01438"/>
    </source>
</evidence>
<evidence type="ECO:0000255" key="2">
    <source>
        <dbReference type="PROSITE-ProRule" id="PRU01130"/>
    </source>
</evidence>
<evidence type="ECO:0000269" key="3">
    <source>
    </source>
</evidence>
<accession>Q18CB2</accession>
<comment type="function">
    <text evidence="1">Participates in a DNA-damage check-point that is active prior to asymmetric division when DNA is damaged. DisA forms globular foci that rapidly scan along the chromosomes during sporulation, searching for lesions. When a lesion is present, DisA pauses at the lesion site. This triggers a cellular response that culminates in a temporary block in sporulation initiation.</text>
</comment>
<comment type="function">
    <text evidence="1 3">Also has diadenylate cyclase activity, catalyzing the condensation of 2 ATP molecules into cyclic di-AMP (c-di-AMP) (PubMed:25965978). c-di-AMP acts as a signaling molecule that couples DNA integrity with progression of sporulation. The rise in c-di-AMP level generated by DisA while scanning the chromosome, operates as a positive signal that advances sporulation; upon encountering a lesion, the DisA focus arrests at the damaged site and halts c-di-AMP synthesis.</text>
</comment>
<comment type="catalytic activity">
    <reaction evidence="1">
        <text>2 ATP = 3',3'-c-di-AMP + 2 diphosphate</text>
        <dbReference type="Rhea" id="RHEA:35655"/>
        <dbReference type="ChEBI" id="CHEBI:30616"/>
        <dbReference type="ChEBI" id="CHEBI:33019"/>
        <dbReference type="ChEBI" id="CHEBI:71500"/>
        <dbReference type="EC" id="2.7.7.85"/>
    </reaction>
</comment>
<comment type="cofactor">
    <cofactor evidence="1">
        <name>Mg(2+)</name>
        <dbReference type="ChEBI" id="CHEBI:18420"/>
    </cofactor>
</comment>
<comment type="subunit">
    <text evidence="1">Homooctamer.</text>
</comment>
<comment type="similarity">
    <text evidence="1">Belongs to the DisA family.</text>
</comment>
<proteinExistence type="inferred from homology"/>
<protein>
    <recommendedName>
        <fullName evidence="1">DNA integrity scanning protein DisA</fullName>
    </recommendedName>
    <alternativeName>
        <fullName evidence="1">Cyclic di-AMP synthase</fullName>
        <shortName evidence="1">c-di-AMP synthase</shortName>
    </alternativeName>
    <alternativeName>
        <fullName evidence="1">Diadenylate cyclase</fullName>
        <ecNumber evidence="1">2.7.7.85</ecNumber>
    </alternativeName>
</protein>
<name>DISA_CLOD6</name>
<feature type="chain" id="PRO_1000017367" description="DNA integrity scanning protein DisA">
    <location>
        <begin position="1"/>
        <end position="356"/>
    </location>
</feature>
<feature type="domain" description="DAC" evidence="2">
    <location>
        <begin position="7"/>
        <end position="147"/>
    </location>
</feature>
<feature type="binding site" evidence="1">
    <location>
        <position position="74"/>
    </location>
    <ligand>
        <name>ATP</name>
        <dbReference type="ChEBI" id="CHEBI:30616"/>
    </ligand>
</feature>
<feature type="binding site" evidence="1">
    <location>
        <position position="92"/>
    </location>
    <ligand>
        <name>ATP</name>
        <dbReference type="ChEBI" id="CHEBI:30616"/>
    </ligand>
</feature>
<feature type="binding site" evidence="1">
    <location>
        <begin position="105"/>
        <end position="109"/>
    </location>
    <ligand>
        <name>ATP</name>
        <dbReference type="ChEBI" id="CHEBI:30616"/>
    </ligand>
</feature>
<reference key="1">
    <citation type="journal article" date="2006" name="Nat. Genet.">
        <title>The multidrug-resistant human pathogen Clostridium difficile has a highly mobile, mosaic genome.</title>
        <authorList>
            <person name="Sebaihia M."/>
            <person name="Wren B.W."/>
            <person name="Mullany P."/>
            <person name="Fairweather N.F."/>
            <person name="Minton N."/>
            <person name="Stabler R."/>
            <person name="Thomson N.R."/>
            <person name="Roberts A.P."/>
            <person name="Cerdeno-Tarraga A.M."/>
            <person name="Wang H."/>
            <person name="Holden M.T.G."/>
            <person name="Wright A."/>
            <person name="Churcher C."/>
            <person name="Quail M.A."/>
            <person name="Baker S."/>
            <person name="Bason N."/>
            <person name="Brooks K."/>
            <person name="Chillingworth T."/>
            <person name="Cronin A."/>
            <person name="Davis P."/>
            <person name="Dowd L."/>
            <person name="Fraser A."/>
            <person name="Feltwell T."/>
            <person name="Hance Z."/>
            <person name="Holroyd S."/>
            <person name="Jagels K."/>
            <person name="Moule S."/>
            <person name="Mungall K."/>
            <person name="Price C."/>
            <person name="Rabbinowitsch E."/>
            <person name="Sharp S."/>
            <person name="Simmonds M."/>
            <person name="Stevens K."/>
            <person name="Unwin L."/>
            <person name="Whithead S."/>
            <person name="Dupuy B."/>
            <person name="Dougan G."/>
            <person name="Barrell B."/>
            <person name="Parkhill J."/>
        </authorList>
    </citation>
    <scope>NUCLEOTIDE SEQUENCE [LARGE SCALE GENOMIC DNA]</scope>
    <source>
        <strain>630</strain>
    </source>
</reference>
<reference key="2">
    <citation type="journal article" date="2015" name="J. Am. Chem. Soc.">
        <title>RNA-based fluorescent biosensors for live cell imaging of second messenger cyclic di-AMP.</title>
        <authorList>
            <person name="Kellenberger C.A."/>
            <person name="Chen C."/>
            <person name="Whiteley A.T."/>
            <person name="Portnoy D.A."/>
            <person name="Hammond M.C."/>
        </authorList>
    </citation>
    <scope>FUNCTION</scope>
</reference>
<keyword id="KW-0067">ATP-binding</keyword>
<keyword id="KW-0227">DNA damage</keyword>
<keyword id="KW-0234">DNA repair</keyword>
<keyword id="KW-0238">DNA-binding</keyword>
<keyword id="KW-0460">Magnesium</keyword>
<keyword id="KW-0547">Nucleotide-binding</keyword>
<keyword id="KW-0548">Nucleotidyltransferase</keyword>
<keyword id="KW-1185">Reference proteome</keyword>
<keyword id="KW-0808">Transferase</keyword>
<sequence length="356" mass="40369">MENFLDNKNMLYALKMISPGTPLRLGLNNVLRAKTGGLIVIATNEDVMKIVDGGFAINAEYSPSYLYELAKMDGAIVLSGDVKKILFANAQLIPDYFIETSETGTRHRTAERVAKQTGAIVIGISQRRNVITVYRGNEKYVVEDISKIFTKANQAIQTLEKYKTVLDQAVTNLNALEFNDLVTIYDVALVMQKMEMVMRVTSIIEKYVIELGDEGTLVSMQLEELMGTTRIDQKLIFKDYNKENTEIKELMKKVKNLNSEELIELVNMAKLLGYSGFSESMDMPIKTRGYRILSKIHRLPTAIIENLVNYFENFQQILDASIEELDEVEGIGEIRATYIKNGLIKMKQLVLLDRHI</sequence>
<gene>
    <name evidence="1" type="primary">disA</name>
    <name type="ordered locus">CD630_00280</name>
</gene>